<accession>Q4R7T7</accession>
<protein>
    <recommendedName>
        <fullName>Tubulin delta chain</fullName>
    </recommendedName>
    <alternativeName>
        <fullName>Delta-tubulin</fullName>
    </alternativeName>
</protein>
<organism>
    <name type="scientific">Macaca fascicularis</name>
    <name type="common">Crab-eating macaque</name>
    <name type="synonym">Cynomolgus monkey</name>
    <dbReference type="NCBI Taxonomy" id="9541"/>
    <lineage>
        <taxon>Eukaryota</taxon>
        <taxon>Metazoa</taxon>
        <taxon>Chordata</taxon>
        <taxon>Craniata</taxon>
        <taxon>Vertebrata</taxon>
        <taxon>Euteleostomi</taxon>
        <taxon>Mammalia</taxon>
        <taxon>Eutheria</taxon>
        <taxon>Euarchontoglires</taxon>
        <taxon>Primates</taxon>
        <taxon>Haplorrhini</taxon>
        <taxon>Catarrhini</taxon>
        <taxon>Cercopithecidae</taxon>
        <taxon>Cercopithecinae</taxon>
        <taxon>Macaca</taxon>
    </lineage>
</organism>
<name>TBD_MACFA</name>
<evidence type="ECO:0000250" key="1">
    <source>
        <dbReference type="UniProtKB" id="Q9R1K7"/>
    </source>
</evidence>
<evidence type="ECO:0000255" key="2"/>
<evidence type="ECO:0000305" key="3"/>
<comment type="function">
    <text evidence="1">Acts as a positive regulator of hedgehog signaling and regulates ciliary function.</text>
</comment>
<comment type="subunit">
    <text evidence="1">Found in a complex with TEDC1, TEDC2, TUBE1 and TUBD1.</text>
</comment>
<comment type="subcellular location">
    <subcellularLocation>
        <location evidence="1">Nucleus</location>
    </subcellularLocation>
    <subcellularLocation>
        <location evidence="1">Cytoplasm</location>
    </subcellularLocation>
    <subcellularLocation>
        <location evidence="1">Cytoplasm</location>
        <location evidence="1">Cytoskeleton</location>
        <location evidence="1">Microtubule organizing center</location>
        <location evidence="1">Centrosome</location>
        <location evidence="1">Centriole</location>
    </subcellularLocation>
    <subcellularLocation>
        <location evidence="1">Cell projection</location>
        <location evidence="1">Cilium</location>
    </subcellularLocation>
    <text evidence="1">Associated with centrioles. Both cytoplasmic and nuclear. In the elongating spermatid it is associated with the manchette, a specialized microtubule system present during reshaping of the sperm head.</text>
</comment>
<comment type="similarity">
    <text evidence="3">Belongs to the tubulin family.</text>
</comment>
<keyword id="KW-0966">Cell projection</keyword>
<keyword id="KW-0970">Cilium biogenesis/degradation</keyword>
<keyword id="KW-0963">Cytoplasm</keyword>
<keyword id="KW-0206">Cytoskeleton</keyword>
<keyword id="KW-0217">Developmental protein</keyword>
<keyword id="KW-0342">GTP-binding</keyword>
<keyword id="KW-0493">Microtubule</keyword>
<keyword id="KW-0547">Nucleotide-binding</keyword>
<keyword id="KW-0539">Nucleus</keyword>
<keyword id="KW-1185">Reference proteome</keyword>
<reference key="1">
    <citation type="submission" date="2005-06" db="EMBL/GenBank/DDBJ databases">
        <title>DNA sequences of macaque genes expressed in brain or testis and its evolutionary implications.</title>
        <authorList>
            <consortium name="International consortium for macaque cDNA sequencing and analysis"/>
        </authorList>
    </citation>
    <scope>NUCLEOTIDE SEQUENCE [LARGE SCALE MRNA]</scope>
    <source>
        <tissue>Testis</tissue>
    </source>
</reference>
<proteinExistence type="evidence at transcript level"/>
<gene>
    <name type="primary">TUBD1</name>
    <name type="ORF">QtsA-14412</name>
</gene>
<dbReference type="EMBL" id="AB168725">
    <property type="protein sequence ID" value="BAE00835.1"/>
    <property type="molecule type" value="mRNA"/>
</dbReference>
<dbReference type="RefSeq" id="NP_001272233.1">
    <property type="nucleotide sequence ID" value="NM_001285304.1"/>
</dbReference>
<dbReference type="SMR" id="Q4R7T7"/>
<dbReference type="STRING" id="9541.ENSMFAP00000028190"/>
<dbReference type="eggNOG" id="KOG1374">
    <property type="taxonomic scope" value="Eukaryota"/>
</dbReference>
<dbReference type="Proteomes" id="UP000233100">
    <property type="component" value="Unplaced"/>
</dbReference>
<dbReference type="GO" id="GO:0005814">
    <property type="term" value="C:centriole"/>
    <property type="evidence" value="ECO:0007669"/>
    <property type="project" value="UniProtKB-SubCell"/>
</dbReference>
<dbReference type="GO" id="GO:0005929">
    <property type="term" value="C:cilium"/>
    <property type="evidence" value="ECO:0007669"/>
    <property type="project" value="UniProtKB-SubCell"/>
</dbReference>
<dbReference type="GO" id="GO:0005737">
    <property type="term" value="C:cytoplasm"/>
    <property type="evidence" value="ECO:0007669"/>
    <property type="project" value="UniProtKB-SubCell"/>
</dbReference>
<dbReference type="GO" id="GO:0005874">
    <property type="term" value="C:microtubule"/>
    <property type="evidence" value="ECO:0007669"/>
    <property type="project" value="UniProtKB-KW"/>
</dbReference>
<dbReference type="GO" id="GO:0005634">
    <property type="term" value="C:nucleus"/>
    <property type="evidence" value="ECO:0007669"/>
    <property type="project" value="UniProtKB-SubCell"/>
</dbReference>
<dbReference type="GO" id="GO:0005525">
    <property type="term" value="F:GTP binding"/>
    <property type="evidence" value="ECO:0007669"/>
    <property type="project" value="UniProtKB-KW"/>
</dbReference>
<dbReference type="GO" id="GO:0005200">
    <property type="term" value="F:structural constituent of cytoskeleton"/>
    <property type="evidence" value="ECO:0007669"/>
    <property type="project" value="InterPro"/>
</dbReference>
<dbReference type="GO" id="GO:0030030">
    <property type="term" value="P:cell projection organization"/>
    <property type="evidence" value="ECO:0007669"/>
    <property type="project" value="UniProtKB-KW"/>
</dbReference>
<dbReference type="GO" id="GO:0007017">
    <property type="term" value="P:microtubule-based process"/>
    <property type="evidence" value="ECO:0007669"/>
    <property type="project" value="InterPro"/>
</dbReference>
<dbReference type="GO" id="GO:0045880">
    <property type="term" value="P:positive regulation of smoothened signaling pathway"/>
    <property type="evidence" value="ECO:0000250"/>
    <property type="project" value="UniProtKB"/>
</dbReference>
<dbReference type="CDD" id="cd02189">
    <property type="entry name" value="delta_zeta_tubulin-like"/>
    <property type="match status" value="1"/>
</dbReference>
<dbReference type="FunFam" id="1.10.287.600:FF:000010">
    <property type="entry name" value="Tubulin delta chain"/>
    <property type="match status" value="1"/>
</dbReference>
<dbReference type="FunFam" id="3.40.50.1440:FF:000021">
    <property type="entry name" value="Tubulin delta chain"/>
    <property type="match status" value="1"/>
</dbReference>
<dbReference type="Gene3D" id="1.10.287.600">
    <property type="entry name" value="Helix hairpin bin"/>
    <property type="match status" value="1"/>
</dbReference>
<dbReference type="Gene3D" id="3.40.50.1440">
    <property type="entry name" value="Tubulin/FtsZ, GTPase domain"/>
    <property type="match status" value="1"/>
</dbReference>
<dbReference type="InterPro" id="IPR002967">
    <property type="entry name" value="Delta_tubulin"/>
</dbReference>
<dbReference type="InterPro" id="IPR008280">
    <property type="entry name" value="Tub_FtsZ_C"/>
</dbReference>
<dbReference type="InterPro" id="IPR000217">
    <property type="entry name" value="Tubulin"/>
</dbReference>
<dbReference type="InterPro" id="IPR036525">
    <property type="entry name" value="Tubulin/FtsZ_GTPase_sf"/>
</dbReference>
<dbReference type="InterPro" id="IPR023123">
    <property type="entry name" value="Tubulin_C"/>
</dbReference>
<dbReference type="InterPro" id="IPR017975">
    <property type="entry name" value="Tubulin_CS"/>
</dbReference>
<dbReference type="InterPro" id="IPR003008">
    <property type="entry name" value="Tubulin_FtsZ_GTPase"/>
</dbReference>
<dbReference type="PANTHER" id="PTHR11588">
    <property type="entry name" value="TUBULIN"/>
    <property type="match status" value="1"/>
</dbReference>
<dbReference type="Pfam" id="PF00091">
    <property type="entry name" value="Tubulin"/>
    <property type="match status" value="1"/>
</dbReference>
<dbReference type="PRINTS" id="PR01224">
    <property type="entry name" value="DELTATUBULIN"/>
</dbReference>
<dbReference type="PRINTS" id="PR01161">
    <property type="entry name" value="TUBULIN"/>
</dbReference>
<dbReference type="SMART" id="SM00864">
    <property type="entry name" value="Tubulin"/>
    <property type="match status" value="1"/>
</dbReference>
<dbReference type="SUPFAM" id="SSF55307">
    <property type="entry name" value="Tubulin C-terminal domain-like"/>
    <property type="match status" value="1"/>
</dbReference>
<dbReference type="SUPFAM" id="SSF52490">
    <property type="entry name" value="Tubulin nucleotide-binding domain-like"/>
    <property type="match status" value="1"/>
</dbReference>
<dbReference type="PROSITE" id="PS00227">
    <property type="entry name" value="TUBULIN"/>
    <property type="match status" value="1"/>
</dbReference>
<feature type="chain" id="PRO_0000233351" description="Tubulin delta chain">
    <location>
        <begin position="1"/>
        <end position="453"/>
    </location>
</feature>
<feature type="binding site" evidence="2">
    <location>
        <begin position="143"/>
        <end position="149"/>
    </location>
    <ligand>
        <name>GTP</name>
        <dbReference type="ChEBI" id="CHEBI:37565"/>
    </ligand>
</feature>
<sequence length="453" mass="51035">MSIVTVQLGQCGNQIGFEVFDALLSDSHSSQGLCCKRENEAYQASCKERFFSEEENGVPIARAVLVDMEPKVINQTLSKAAQSGRWKYGQHACFCQKQGSGNNWAYGYSVHGPRHEESIMDLIRKEVEKCDSFSGFFIIMSMAGGTGSGIGAFVTQNLQDQYSNSLKMNQIIWPYGTGEVIVQNYNSILTLSHLYRSSDALLVHENDAVHKICAKLMNIKQISFSDINQVLAHQLGSVFQPTYSAESSFHYRRNPLGDLMEHLVPHPEFKMLSIRNVPHMSENSLAYSTFTWAGLLKHLRQMLISNAKMEEGIDWHARPPLSGLPSLGKMSLNKDLHFNTSIANLVILRGKDVQSADVEGFKDPALYTSWLEPVNAFNVWKTQRAFSKYEKSAVLVSNSQFLVKPLDMIVRKAWNMFASKAYIHQYTKFGIEEEDFLDSFTSLEQVVASYCNL</sequence>